<evidence type="ECO:0000250" key="1"/>
<evidence type="ECO:0000255" key="2">
    <source>
        <dbReference type="HAMAP-Rule" id="MF_01158"/>
    </source>
</evidence>
<organism>
    <name type="scientific">Pectobacterium atrosepticum (strain SCRI 1043 / ATCC BAA-672)</name>
    <name type="common">Erwinia carotovora subsp. atroseptica</name>
    <dbReference type="NCBI Taxonomy" id="218491"/>
    <lineage>
        <taxon>Bacteria</taxon>
        <taxon>Pseudomonadati</taxon>
        <taxon>Pseudomonadota</taxon>
        <taxon>Gammaproteobacteria</taxon>
        <taxon>Enterobacterales</taxon>
        <taxon>Pectobacteriaceae</taxon>
        <taxon>Pectobacterium</taxon>
    </lineage>
</organism>
<dbReference type="EMBL" id="BX950851">
    <property type="protein sequence ID" value="CAG74167.1"/>
    <property type="molecule type" value="Genomic_DNA"/>
</dbReference>
<dbReference type="SMR" id="Q6D7R8"/>
<dbReference type="STRING" id="218491.ECA1257"/>
<dbReference type="KEGG" id="eca:ECA1257"/>
<dbReference type="eggNOG" id="COG0593">
    <property type="taxonomic scope" value="Bacteria"/>
</dbReference>
<dbReference type="HOGENOM" id="CLU_072265_1_1_6"/>
<dbReference type="Proteomes" id="UP000007966">
    <property type="component" value="Chromosome"/>
</dbReference>
<dbReference type="GO" id="GO:0006270">
    <property type="term" value="P:DNA replication initiation"/>
    <property type="evidence" value="ECO:0007669"/>
    <property type="project" value="TreeGrafter"/>
</dbReference>
<dbReference type="GO" id="GO:0032297">
    <property type="term" value="P:negative regulation of DNA-templated DNA replication initiation"/>
    <property type="evidence" value="ECO:0007669"/>
    <property type="project" value="InterPro"/>
</dbReference>
<dbReference type="FunFam" id="1.10.8.60:FF:000024">
    <property type="entry name" value="DnaA regulatory inactivator Hda"/>
    <property type="match status" value="1"/>
</dbReference>
<dbReference type="FunFam" id="3.40.50.300:FF:000452">
    <property type="entry name" value="DnaA regulatory inactivator Hda"/>
    <property type="match status" value="1"/>
</dbReference>
<dbReference type="Gene3D" id="1.10.8.60">
    <property type="match status" value="1"/>
</dbReference>
<dbReference type="Gene3D" id="3.40.50.300">
    <property type="entry name" value="P-loop containing nucleotide triphosphate hydrolases"/>
    <property type="match status" value="1"/>
</dbReference>
<dbReference type="HAMAP" id="MF_01158">
    <property type="entry name" value="Hda"/>
    <property type="match status" value="1"/>
</dbReference>
<dbReference type="InterPro" id="IPR020591">
    <property type="entry name" value="Chromosome_initiator_DnaA-like"/>
</dbReference>
<dbReference type="InterPro" id="IPR013317">
    <property type="entry name" value="DnaA_dom"/>
</dbReference>
<dbReference type="InterPro" id="IPR017788">
    <property type="entry name" value="Hda"/>
</dbReference>
<dbReference type="InterPro" id="IPR022864">
    <property type="entry name" value="Hda_Enterobact"/>
</dbReference>
<dbReference type="InterPro" id="IPR055199">
    <property type="entry name" value="Hda_lid"/>
</dbReference>
<dbReference type="InterPro" id="IPR027417">
    <property type="entry name" value="P-loop_NTPase"/>
</dbReference>
<dbReference type="NCBIfam" id="TIGR03420">
    <property type="entry name" value="DnaA_homol_Hda"/>
    <property type="match status" value="1"/>
</dbReference>
<dbReference type="NCBIfam" id="NF005982">
    <property type="entry name" value="PRK08084.1"/>
    <property type="match status" value="1"/>
</dbReference>
<dbReference type="PANTHER" id="PTHR30050">
    <property type="entry name" value="CHROMOSOMAL REPLICATION INITIATOR PROTEIN DNAA"/>
    <property type="match status" value="1"/>
</dbReference>
<dbReference type="PANTHER" id="PTHR30050:SF5">
    <property type="entry name" value="DNAA REGULATORY INACTIVATOR HDA"/>
    <property type="match status" value="1"/>
</dbReference>
<dbReference type="Pfam" id="PF00308">
    <property type="entry name" value="Bac_DnaA"/>
    <property type="match status" value="1"/>
</dbReference>
<dbReference type="Pfam" id="PF22688">
    <property type="entry name" value="Hda_lid"/>
    <property type="match status" value="1"/>
</dbReference>
<dbReference type="PRINTS" id="PR00051">
    <property type="entry name" value="DNAA"/>
</dbReference>
<dbReference type="SUPFAM" id="SSF52540">
    <property type="entry name" value="P-loop containing nucleoside triphosphate hydrolases"/>
    <property type="match status" value="1"/>
</dbReference>
<sequence>MLEVILNTPAQLSLPLYLPDDETFASFYPGENASLLAAVNNALYQEHGSYIYFWSREGGGRSHLLHAACAELSRQERAVGYVPLDKRAYFVPDVLEGMEQLALVCIDNIESIAGDEAWEMAVFNLYNRIQETGRALLLITGDRPPRQLNIRLPDLASRLDWGQIYKLQPLSDDEKGEALQLRARLRGFELPEDVSRFLLKRLDREMRTLFMTLDQLDHASITAQRKLTIPFVKEILGL</sequence>
<accession>Q6D7R8</accession>
<comment type="function">
    <text evidence="1">Mediates the interaction of DNA replication initiator protein DnaA with DNA polymerase subunit beta sliding clamp (dnaN). Stimulates hydrolysis of ATP-DnaA to ADP-DnaA, rendering DnaA inactive for reinitiation, a process called regulatory inhibition of DnaA or RIDA (By similarity).</text>
</comment>
<comment type="subunit">
    <text evidence="2">The active form seems to be an ADP-bound monomer. Forms the RIDA complex (regulatory inactivation of DnaA) of ATP-DnaA, ADP-Hda and the DNA-loaded beta sliding clamp (dnaN).</text>
</comment>
<comment type="similarity">
    <text evidence="2">Belongs to the DnaA family. HdA subfamily.</text>
</comment>
<proteinExistence type="inferred from homology"/>
<protein>
    <recommendedName>
        <fullName evidence="2">DnaA regulatory inactivator Hda</fullName>
    </recommendedName>
</protein>
<reference key="1">
    <citation type="journal article" date="2004" name="Proc. Natl. Acad. Sci. U.S.A.">
        <title>Genome sequence of the enterobacterial phytopathogen Erwinia carotovora subsp. atroseptica and characterization of virulence factors.</title>
        <authorList>
            <person name="Bell K.S."/>
            <person name="Sebaihia M."/>
            <person name="Pritchard L."/>
            <person name="Holden M.T.G."/>
            <person name="Hyman L.J."/>
            <person name="Holeva M.C."/>
            <person name="Thomson N.R."/>
            <person name="Bentley S.D."/>
            <person name="Churcher L.J.C."/>
            <person name="Mungall K."/>
            <person name="Atkin R."/>
            <person name="Bason N."/>
            <person name="Brooks K."/>
            <person name="Chillingworth T."/>
            <person name="Clark K."/>
            <person name="Doggett J."/>
            <person name="Fraser A."/>
            <person name="Hance Z."/>
            <person name="Hauser H."/>
            <person name="Jagels K."/>
            <person name="Moule S."/>
            <person name="Norbertczak H."/>
            <person name="Ormond D."/>
            <person name="Price C."/>
            <person name="Quail M.A."/>
            <person name="Sanders M."/>
            <person name="Walker D."/>
            <person name="Whitehead S."/>
            <person name="Salmond G.P.C."/>
            <person name="Birch P.R.J."/>
            <person name="Parkhill J."/>
            <person name="Toth I.K."/>
        </authorList>
    </citation>
    <scope>NUCLEOTIDE SEQUENCE [LARGE SCALE GENOMIC DNA]</scope>
    <source>
        <strain>SCRI 1043 / ATCC BAA-672</strain>
    </source>
</reference>
<gene>
    <name evidence="2" type="primary">hda</name>
    <name type="ordered locus">ECA1257</name>
</gene>
<name>HDA_PECAS</name>
<keyword id="KW-0235">DNA replication</keyword>
<keyword id="KW-0236">DNA replication inhibitor</keyword>
<keyword id="KW-1185">Reference proteome</keyword>
<feature type="chain" id="PRO_0000114317" description="DnaA regulatory inactivator Hda">
    <location>
        <begin position="1"/>
        <end position="238"/>
    </location>
</feature>